<sequence>MLGIRAMLVMLDYYWIQLITNNGTRSNNTDTIFVSLLTGPNGVTRTAIGGLYSNYTNLTGAFGFTSTNMSATNSSAEDNWSVTNLTESCINRGESYVTTIWLLDCTKNDTYWYYGNAYNHTCEGTISGYLLGMCKLWKSWVNNITSYNTVRVESLGNETRCMLLPRQYTLNATVEWYNKSEGDVPEEFMDYVILTPLAVLTCGLQEAYILDKGRRYMYLFSVSCVGITGTVSIILVSLSLLILICYYRCGRLLICPRGFELLPEFTEEEEEKEKLLTHNDIEVQVPIRTRRLLVPWIRESKMWVLPPPLPPRPPHLIEFPPSPPPSPGPMHMVVCMPA</sequence>
<organism>
    <name type="scientific">Human cytomegalovirus (strain Merlin)</name>
    <name type="common">HHV-5</name>
    <name type="synonym">Human herpesvirus 5</name>
    <dbReference type="NCBI Taxonomy" id="295027"/>
    <lineage>
        <taxon>Viruses</taxon>
        <taxon>Duplodnaviria</taxon>
        <taxon>Heunggongvirae</taxon>
        <taxon>Peploviricota</taxon>
        <taxon>Herviviricetes</taxon>
        <taxon>Herpesvirales</taxon>
        <taxon>Orthoherpesviridae</taxon>
        <taxon>Betaherpesvirinae</taxon>
        <taxon>Cytomegalovirus</taxon>
        <taxon>Cytomegalovirus humanbeta5</taxon>
        <taxon>Human cytomegalovirus</taxon>
    </lineage>
</organism>
<reference key="1">
    <citation type="journal article" date="2004" name="J. Gen. Virol.">
        <title>Genetic content of wild-type human cytomegalovirus.</title>
        <authorList>
            <person name="Dolan A."/>
            <person name="Cunningham C."/>
            <person name="Hector R.D."/>
            <person name="Hassan-Walker A.F."/>
            <person name="Lee L."/>
            <person name="Addison C."/>
            <person name="Dargan D.J."/>
            <person name="McGeoch D.J."/>
            <person name="Gatherer D."/>
            <person name="Emery V.C."/>
            <person name="Griffiths P.D."/>
            <person name="Sinzger C."/>
            <person name="McSharry B.P."/>
            <person name="Wilkinson G.W.G."/>
            <person name="Davison A.J."/>
        </authorList>
    </citation>
    <scope>NUCLEOTIDE SEQUENCE [LARGE SCALE GENOMIC DNA]</scope>
</reference>
<gene>
    <name type="primary">UL20</name>
</gene>
<protein>
    <recommendedName>
        <fullName>Membrane protein UL20</fullName>
    </recommendedName>
</protein>
<dbReference type="EMBL" id="AY446894">
    <property type="protein sequence ID" value="AAR31585.1"/>
    <property type="molecule type" value="Genomic_DNA"/>
</dbReference>
<dbReference type="RefSeq" id="YP_081479.1">
    <property type="nucleotide sequence ID" value="NC_006273.2"/>
</dbReference>
<dbReference type="GlyCosmos" id="F5H9Z4">
    <property type="glycosylation" value="12 sites, No reported glycans"/>
</dbReference>
<dbReference type="DNASU" id="3077434"/>
<dbReference type="GeneID" id="3077434"/>
<dbReference type="KEGG" id="vg:3077434"/>
<dbReference type="Proteomes" id="UP000000938">
    <property type="component" value="Segment"/>
</dbReference>
<dbReference type="GO" id="GO:0044167">
    <property type="term" value="C:host cell endoplasmic reticulum membrane"/>
    <property type="evidence" value="ECO:0007669"/>
    <property type="project" value="UniProtKB-SubCell"/>
</dbReference>
<dbReference type="GO" id="GO:0016020">
    <property type="term" value="C:membrane"/>
    <property type="evidence" value="ECO:0007669"/>
    <property type="project" value="UniProtKB-KW"/>
</dbReference>
<dbReference type="InterPro" id="IPR035142">
    <property type="entry name" value="UL20"/>
</dbReference>
<dbReference type="Pfam" id="PF17582">
    <property type="entry name" value="UL20"/>
    <property type="match status" value="1"/>
</dbReference>
<accession>F5H9Z4</accession>
<evidence type="ECO:0000250" key="1"/>
<evidence type="ECO:0000255" key="2"/>
<evidence type="ECO:0000305" key="3"/>
<keyword id="KW-0325">Glycoprotein</keyword>
<keyword id="KW-1038">Host endoplasmic reticulum</keyword>
<keyword id="KW-1043">Host membrane</keyword>
<keyword id="KW-0472">Membrane</keyword>
<keyword id="KW-1185">Reference proteome</keyword>
<keyword id="KW-0812">Transmembrane</keyword>
<keyword id="KW-1133">Transmembrane helix</keyword>
<feature type="chain" id="PRO_0000418246" description="Membrane protein UL20">
    <location>
        <begin position="1"/>
        <end position="338"/>
    </location>
</feature>
<feature type="topological domain" description="Lumenal" evidence="2">
    <location>
        <begin position="26"/>
        <end position="223"/>
    </location>
</feature>
<feature type="transmembrane region" description="Helical" evidence="2">
    <location>
        <begin position="224"/>
        <end position="244"/>
    </location>
</feature>
<feature type="topological domain" description="Cytoplasmic" evidence="2">
    <location>
        <begin position="245"/>
        <end position="338"/>
    </location>
</feature>
<feature type="glycosylation site" description="N-linked (GlcNAc...) asparagine; by host" evidence="2">
    <location>
        <position position="27"/>
    </location>
</feature>
<feature type="glycosylation site" description="N-linked (GlcNAc...) asparagine; by host" evidence="2">
    <location>
        <position position="54"/>
    </location>
</feature>
<feature type="glycosylation site" description="N-linked (GlcNAc...) asparagine; by host" evidence="2">
    <location>
        <position position="57"/>
    </location>
</feature>
<feature type="glycosylation site" description="N-linked (GlcNAc...) asparagine; by host" evidence="2">
    <location>
        <position position="68"/>
    </location>
</feature>
<feature type="glycosylation site" description="N-linked (GlcNAc...) asparagine; by host" evidence="2">
    <location>
        <position position="73"/>
    </location>
</feature>
<feature type="glycosylation site" description="N-linked (GlcNAc...) asparagine; by host" evidence="2">
    <location>
        <position position="79"/>
    </location>
</feature>
<feature type="glycosylation site" description="N-linked (GlcNAc...) asparagine; by host" evidence="2">
    <location>
        <position position="84"/>
    </location>
</feature>
<feature type="glycosylation site" description="N-linked (GlcNAc...) asparagine; by host" evidence="2">
    <location>
        <position position="108"/>
    </location>
</feature>
<feature type="glycosylation site" description="N-linked (GlcNAc...) asparagine; by host" evidence="2">
    <location>
        <position position="119"/>
    </location>
</feature>
<feature type="glycosylation site" description="N-linked (GlcNAc...) asparagine; by host" evidence="2">
    <location>
        <position position="143"/>
    </location>
</feature>
<feature type="glycosylation site" description="N-linked (GlcNAc...) asparagine; by host" evidence="2">
    <location>
        <position position="171"/>
    </location>
</feature>
<feature type="glycosylation site" description="N-linked (GlcNAc...) asparagine; by host" evidence="2">
    <location>
        <position position="178"/>
    </location>
</feature>
<organismHost>
    <name type="scientific">Homo sapiens</name>
    <name type="common">Human</name>
    <dbReference type="NCBI Taxonomy" id="9606"/>
</organismHost>
<proteinExistence type="inferred from homology"/>
<name>UL20_HCMVM</name>
<comment type="subcellular location">
    <subcellularLocation>
        <location evidence="3">Host endoplasmic reticulum membrane</location>
        <topology evidence="3">Single-pass type I membrane protein</topology>
    </subcellularLocation>
    <text evidence="1">Does not reach the host cell surface but is rapidely targeted to endosomes and lysosomes.</text>
</comment>
<comment type="similarity">
    <text evidence="3">Belongs to the HHV-5 UL20 protein family.</text>
</comment>